<name>CYB_BRANN</name>
<organism>
    <name type="scientific">Brachyphylla nana</name>
    <name type="common">Cuban fruit-eating bat</name>
    <dbReference type="NCBI Taxonomy" id="290570"/>
    <lineage>
        <taxon>Eukaryota</taxon>
        <taxon>Metazoa</taxon>
        <taxon>Chordata</taxon>
        <taxon>Craniata</taxon>
        <taxon>Vertebrata</taxon>
        <taxon>Euteleostomi</taxon>
        <taxon>Mammalia</taxon>
        <taxon>Eutheria</taxon>
        <taxon>Laurasiatheria</taxon>
        <taxon>Chiroptera</taxon>
        <taxon>Yangochiroptera</taxon>
        <taxon>Phyllostomidae</taxon>
        <taxon>Brachyphyllinae</taxon>
        <taxon>Brachyphylla</taxon>
    </lineage>
</organism>
<geneLocation type="mitochondrion"/>
<accession>Q4VUY6</accession>
<feature type="chain" id="PRO_0000254666" description="Cytochrome b">
    <location>
        <begin position="1"/>
        <end position="379"/>
    </location>
</feature>
<feature type="transmembrane region" description="Helical" evidence="2">
    <location>
        <begin position="33"/>
        <end position="53"/>
    </location>
</feature>
<feature type="transmembrane region" description="Helical" evidence="2">
    <location>
        <begin position="77"/>
        <end position="98"/>
    </location>
</feature>
<feature type="transmembrane region" description="Helical" evidence="2">
    <location>
        <begin position="113"/>
        <end position="133"/>
    </location>
</feature>
<feature type="transmembrane region" description="Helical" evidence="2">
    <location>
        <begin position="178"/>
        <end position="198"/>
    </location>
</feature>
<feature type="transmembrane region" description="Helical" evidence="2">
    <location>
        <begin position="226"/>
        <end position="246"/>
    </location>
</feature>
<feature type="transmembrane region" description="Helical" evidence="2">
    <location>
        <begin position="288"/>
        <end position="308"/>
    </location>
</feature>
<feature type="transmembrane region" description="Helical" evidence="2">
    <location>
        <begin position="320"/>
        <end position="340"/>
    </location>
</feature>
<feature type="transmembrane region" description="Helical" evidence="2">
    <location>
        <begin position="347"/>
        <end position="367"/>
    </location>
</feature>
<feature type="binding site" description="axial binding residue" evidence="2">
    <location>
        <position position="83"/>
    </location>
    <ligand>
        <name>heme b</name>
        <dbReference type="ChEBI" id="CHEBI:60344"/>
        <label>b562</label>
    </ligand>
    <ligandPart>
        <name>Fe</name>
        <dbReference type="ChEBI" id="CHEBI:18248"/>
    </ligandPart>
</feature>
<feature type="binding site" description="axial binding residue" evidence="2">
    <location>
        <position position="97"/>
    </location>
    <ligand>
        <name>heme b</name>
        <dbReference type="ChEBI" id="CHEBI:60344"/>
        <label>b566</label>
    </ligand>
    <ligandPart>
        <name>Fe</name>
        <dbReference type="ChEBI" id="CHEBI:18248"/>
    </ligandPart>
</feature>
<feature type="binding site" description="axial binding residue" evidence="2">
    <location>
        <position position="182"/>
    </location>
    <ligand>
        <name>heme b</name>
        <dbReference type="ChEBI" id="CHEBI:60344"/>
        <label>b562</label>
    </ligand>
    <ligandPart>
        <name>Fe</name>
        <dbReference type="ChEBI" id="CHEBI:18248"/>
    </ligandPart>
</feature>
<feature type="binding site" description="axial binding residue" evidence="2">
    <location>
        <position position="196"/>
    </location>
    <ligand>
        <name>heme b</name>
        <dbReference type="ChEBI" id="CHEBI:60344"/>
        <label>b566</label>
    </ligand>
    <ligandPart>
        <name>Fe</name>
        <dbReference type="ChEBI" id="CHEBI:18248"/>
    </ligandPart>
</feature>
<feature type="binding site" evidence="2">
    <location>
        <position position="201"/>
    </location>
    <ligand>
        <name>a ubiquinone</name>
        <dbReference type="ChEBI" id="CHEBI:16389"/>
    </ligand>
</feature>
<gene>
    <name type="primary">MT-CYB</name>
    <name type="synonym">COB</name>
    <name type="synonym">CYTB</name>
    <name type="synonym">MTCYB</name>
</gene>
<protein>
    <recommendedName>
        <fullName>Cytochrome b</fullName>
    </recommendedName>
    <alternativeName>
        <fullName>Complex III subunit 3</fullName>
    </alternativeName>
    <alternativeName>
        <fullName>Complex III subunit III</fullName>
    </alternativeName>
    <alternativeName>
        <fullName>Cytochrome b-c1 complex subunit 3</fullName>
    </alternativeName>
    <alternativeName>
        <fullName>Ubiquinol-cytochrome-c reductase complex cytochrome b subunit</fullName>
    </alternativeName>
</protein>
<sequence>MTNIRKTHPLLKIINSSFVDLPAPSSLSSWWNFGSLLAACLAVQILTGLFLAMHYTSDTATAFDSVAHICRDVNYGWILRYLHANGASMFFICLYLHVGRGLYYGSYTYSETWNVGILLLFAVMATAFMGYVLPWGQMSFWGATVITNLLSAIPYIGTDLVQWIWGGFSVDKATLTRFFAFHFLLPFIVSALVMVHLLFLHETGSNNPTGIPSDPDMIPFHPYYTIKDILGFLIMLTALSALVLFSPDLLGDPDNYTPANPLNTPPHIKPEWYFLFAYAILRSIPNKLGGVLALVMSILILAIVPMLHISKQRSMMFRPLSQCLFWLLVAVLLTLTWIGGQPVEYPYVIIGQVASVLYFLIFLVFMPLVSAVENYLLKW</sequence>
<dbReference type="EMBL" id="AY620440">
    <property type="protein sequence ID" value="AAU04699.1"/>
    <property type="molecule type" value="Genomic_DNA"/>
</dbReference>
<dbReference type="EMBL" id="AY620441">
    <property type="protein sequence ID" value="AAU04700.1"/>
    <property type="molecule type" value="Genomic_DNA"/>
</dbReference>
<dbReference type="EMBL" id="AY620442">
    <property type="protein sequence ID" value="AAU04701.1"/>
    <property type="molecule type" value="Genomic_DNA"/>
</dbReference>
<dbReference type="EMBL" id="AY620443">
    <property type="protein sequence ID" value="AAU04702.1"/>
    <property type="molecule type" value="Genomic_DNA"/>
</dbReference>
<dbReference type="EMBL" id="AY620444">
    <property type="protein sequence ID" value="AAU04703.1"/>
    <property type="molecule type" value="Genomic_DNA"/>
</dbReference>
<dbReference type="SMR" id="Q4VUY6"/>
<dbReference type="GO" id="GO:0005743">
    <property type="term" value="C:mitochondrial inner membrane"/>
    <property type="evidence" value="ECO:0007669"/>
    <property type="project" value="UniProtKB-SubCell"/>
</dbReference>
<dbReference type="GO" id="GO:0045275">
    <property type="term" value="C:respiratory chain complex III"/>
    <property type="evidence" value="ECO:0007669"/>
    <property type="project" value="InterPro"/>
</dbReference>
<dbReference type="GO" id="GO:0046872">
    <property type="term" value="F:metal ion binding"/>
    <property type="evidence" value="ECO:0007669"/>
    <property type="project" value="UniProtKB-KW"/>
</dbReference>
<dbReference type="GO" id="GO:0008121">
    <property type="term" value="F:ubiquinol-cytochrome-c reductase activity"/>
    <property type="evidence" value="ECO:0007669"/>
    <property type="project" value="InterPro"/>
</dbReference>
<dbReference type="GO" id="GO:0006122">
    <property type="term" value="P:mitochondrial electron transport, ubiquinol to cytochrome c"/>
    <property type="evidence" value="ECO:0007669"/>
    <property type="project" value="TreeGrafter"/>
</dbReference>
<dbReference type="CDD" id="cd00290">
    <property type="entry name" value="cytochrome_b_C"/>
    <property type="match status" value="1"/>
</dbReference>
<dbReference type="CDD" id="cd00284">
    <property type="entry name" value="Cytochrome_b_N"/>
    <property type="match status" value="1"/>
</dbReference>
<dbReference type="FunFam" id="1.20.810.10:FF:000002">
    <property type="entry name" value="Cytochrome b"/>
    <property type="match status" value="1"/>
</dbReference>
<dbReference type="Gene3D" id="1.20.810.10">
    <property type="entry name" value="Cytochrome Bc1 Complex, Chain C"/>
    <property type="match status" value="1"/>
</dbReference>
<dbReference type="InterPro" id="IPR005798">
    <property type="entry name" value="Cyt_b/b6_C"/>
</dbReference>
<dbReference type="InterPro" id="IPR036150">
    <property type="entry name" value="Cyt_b/b6_C_sf"/>
</dbReference>
<dbReference type="InterPro" id="IPR005797">
    <property type="entry name" value="Cyt_b/b6_N"/>
</dbReference>
<dbReference type="InterPro" id="IPR027387">
    <property type="entry name" value="Cytb/b6-like_sf"/>
</dbReference>
<dbReference type="InterPro" id="IPR030689">
    <property type="entry name" value="Cytochrome_b"/>
</dbReference>
<dbReference type="InterPro" id="IPR048260">
    <property type="entry name" value="Cytochrome_b_C_euk/bac"/>
</dbReference>
<dbReference type="InterPro" id="IPR048259">
    <property type="entry name" value="Cytochrome_b_N_euk/bac"/>
</dbReference>
<dbReference type="InterPro" id="IPR016174">
    <property type="entry name" value="Di-haem_cyt_TM"/>
</dbReference>
<dbReference type="PANTHER" id="PTHR19271">
    <property type="entry name" value="CYTOCHROME B"/>
    <property type="match status" value="1"/>
</dbReference>
<dbReference type="PANTHER" id="PTHR19271:SF16">
    <property type="entry name" value="CYTOCHROME B"/>
    <property type="match status" value="1"/>
</dbReference>
<dbReference type="Pfam" id="PF00032">
    <property type="entry name" value="Cytochrom_B_C"/>
    <property type="match status" value="1"/>
</dbReference>
<dbReference type="Pfam" id="PF00033">
    <property type="entry name" value="Cytochrome_B"/>
    <property type="match status" value="1"/>
</dbReference>
<dbReference type="PIRSF" id="PIRSF038885">
    <property type="entry name" value="COB"/>
    <property type="match status" value="1"/>
</dbReference>
<dbReference type="SUPFAM" id="SSF81648">
    <property type="entry name" value="a domain/subunit of cytochrome bc1 complex (Ubiquinol-cytochrome c reductase)"/>
    <property type="match status" value="1"/>
</dbReference>
<dbReference type="SUPFAM" id="SSF81342">
    <property type="entry name" value="Transmembrane di-heme cytochromes"/>
    <property type="match status" value="1"/>
</dbReference>
<dbReference type="PROSITE" id="PS51003">
    <property type="entry name" value="CYTB_CTER"/>
    <property type="match status" value="1"/>
</dbReference>
<dbReference type="PROSITE" id="PS51002">
    <property type="entry name" value="CYTB_NTER"/>
    <property type="match status" value="1"/>
</dbReference>
<proteinExistence type="inferred from homology"/>
<keyword id="KW-0249">Electron transport</keyword>
<keyword id="KW-0349">Heme</keyword>
<keyword id="KW-0408">Iron</keyword>
<keyword id="KW-0472">Membrane</keyword>
<keyword id="KW-0479">Metal-binding</keyword>
<keyword id="KW-0496">Mitochondrion</keyword>
<keyword id="KW-0999">Mitochondrion inner membrane</keyword>
<keyword id="KW-0679">Respiratory chain</keyword>
<keyword id="KW-0812">Transmembrane</keyword>
<keyword id="KW-1133">Transmembrane helix</keyword>
<keyword id="KW-0813">Transport</keyword>
<keyword id="KW-0830">Ubiquinone</keyword>
<reference key="1">
    <citation type="submission" date="2004-05" db="EMBL/GenBank/DDBJ databases">
        <title>Phylogeny of Brachyphylla.</title>
        <authorList>
            <person name="Davalos L.M."/>
        </authorList>
    </citation>
    <scope>NUCLEOTIDE SEQUENCE [GENOMIC DNA]</scope>
</reference>
<comment type="function">
    <text evidence="2">Component of the ubiquinol-cytochrome c reductase complex (complex III or cytochrome b-c1 complex) that is part of the mitochondrial respiratory chain. The b-c1 complex mediates electron transfer from ubiquinol to cytochrome c. Contributes to the generation of a proton gradient across the mitochondrial membrane that is then used for ATP synthesis.</text>
</comment>
<comment type="cofactor">
    <cofactor evidence="2">
        <name>heme b</name>
        <dbReference type="ChEBI" id="CHEBI:60344"/>
    </cofactor>
    <text evidence="2">Binds 2 heme b groups non-covalently.</text>
</comment>
<comment type="subunit">
    <text evidence="2">The cytochrome bc1 complex contains 11 subunits: 3 respiratory subunits (MT-CYB, CYC1 and UQCRFS1), 2 core proteins (UQCRC1 and UQCRC2) and 6 low-molecular weight proteins (UQCRH/QCR6, UQCRB/QCR7, UQCRQ/QCR8, UQCR10/QCR9, UQCR11/QCR10 and a cleavage product of UQCRFS1). This cytochrome bc1 complex then forms a dimer.</text>
</comment>
<comment type="subcellular location">
    <subcellularLocation>
        <location evidence="2">Mitochondrion inner membrane</location>
        <topology evidence="2">Multi-pass membrane protein</topology>
    </subcellularLocation>
</comment>
<comment type="miscellaneous">
    <text evidence="1">Heme 1 (or BL or b562) is low-potential and absorbs at about 562 nm, and heme 2 (or BH or b566) is high-potential and absorbs at about 566 nm.</text>
</comment>
<comment type="similarity">
    <text evidence="3 4">Belongs to the cytochrome b family.</text>
</comment>
<comment type="caution">
    <text evidence="2">The full-length protein contains only eight transmembrane helices, not nine as predicted by bioinformatics tools.</text>
</comment>
<evidence type="ECO:0000250" key="1"/>
<evidence type="ECO:0000250" key="2">
    <source>
        <dbReference type="UniProtKB" id="P00157"/>
    </source>
</evidence>
<evidence type="ECO:0000255" key="3">
    <source>
        <dbReference type="PROSITE-ProRule" id="PRU00967"/>
    </source>
</evidence>
<evidence type="ECO:0000255" key="4">
    <source>
        <dbReference type="PROSITE-ProRule" id="PRU00968"/>
    </source>
</evidence>